<proteinExistence type="evidence at protein level"/>
<accession>P0DO28</accession>
<comment type="function">
    <text evidence="2 3 6">Acetyltransferase; part of the gene cluster that mediates the biosynthesis of erinacines, cyathane-xylosides that show unique biological activities, including leishmanicidal activity, stimulating activity for nerve growth-factor synthesis, and agonistic activity toward the kappa opioid receptor (PubMed:28371074, PubMed:31535864). Within the pathway, eriL converts cyathatriol into 11-O-acetyl-cyathatriol (PubMed:31535864). EriL is also able to acetylate cyathin A3 to produce 11-O-acetylcyathin A3 (PubMed:31535864). The first step of the erinacines biosynthesis pathway is catalyzed by the geranylgeranyl diphosphate (GGPP) synthase eriE via conversion of farnesyl pyrophosphate and isopentyl pyrophosphate into geranylgeranyl pyrophosphate (GGPP). GGPP is then substrate of the diterpene cyclase eriG for the production of cyatha-3,12-diene. The cytochrome P450 monooxygenase eriI then hydroxylates cyatha-3,12-diene at C-14 of the seven-membered ring to produce erinacol, which is further hydroxylated at C-15 by the cytochrome P450 monooxygenase eriC to yield cyathadiol. The cytochrome P450 monooxygenase eriA then catalyzes C-11 hydroxylation in the presence of the short chain dehydrogenase/reductase (SDR) eriH, which leads to the production of cyathatriol. The acetyltransferase eriL converts cyathatriol into 11-O-acetyl-cyathatriol. The SDR eriH catalyzes further oxidation of 11-O-acetyl-cyathatriol into 1-O-acetylcyathin A3. Finally, the glycosyl transferase eriJ tranfers xylose from UDP-xylose onto C-14 of 11-O-acetyl-cyathatriol to form eracine Q. EriJ is also able to convert 11-O-acetyl-cyathatriol to eracine Q2 by using UDP-D-glucose as cosubstrate, but at a lower rate (Probable).</text>
</comment>
<comment type="catalytic activity">
    <reaction evidence="2">
        <text>cyathatriol + acetyl-CoA = 11-O-acetylcyathatriol + CoA</text>
        <dbReference type="Rhea" id="RHEA:75567"/>
        <dbReference type="ChEBI" id="CHEBI:57287"/>
        <dbReference type="ChEBI" id="CHEBI:57288"/>
        <dbReference type="ChEBI" id="CHEBI:194349"/>
        <dbReference type="ChEBI" id="CHEBI:194354"/>
    </reaction>
    <physiologicalReaction direction="left-to-right" evidence="2">
        <dbReference type="Rhea" id="RHEA:75568"/>
    </physiologicalReaction>
</comment>
<comment type="catalytic activity">
    <reaction evidence="2">
        <text>cyathin A3 + acetyl-CoA = 11-O-acetylcyathin A3 + CoA</text>
        <dbReference type="Rhea" id="RHEA:75571"/>
        <dbReference type="ChEBI" id="CHEBI:3985"/>
        <dbReference type="ChEBI" id="CHEBI:57287"/>
        <dbReference type="ChEBI" id="CHEBI:57288"/>
        <dbReference type="ChEBI" id="CHEBI:194355"/>
    </reaction>
    <physiologicalReaction direction="left-to-right" evidence="2">
        <dbReference type="Rhea" id="RHEA:75572"/>
    </physiologicalReaction>
</comment>
<comment type="pathway">
    <text evidence="3">Secondary metabolite biosynthesis.</text>
</comment>
<comment type="subcellular location">
    <subcellularLocation>
        <location evidence="1">Membrane</location>
        <topology evidence="1">Multi-pass membrane protein</topology>
    </subcellularLocation>
</comment>
<comment type="similarity">
    <text evidence="5">Belongs to the wax synthase family.</text>
</comment>
<feature type="chain" id="PRO_0000452929" description="Acetyltransferase eriL">
    <location>
        <begin position="1"/>
        <end position="382"/>
    </location>
</feature>
<feature type="transmembrane region" description="Helical" evidence="1">
    <location>
        <begin position="5"/>
        <end position="25"/>
    </location>
</feature>
<feature type="transmembrane region" description="Helical" evidence="1">
    <location>
        <begin position="33"/>
        <end position="53"/>
    </location>
</feature>
<feature type="transmembrane region" description="Helical" evidence="1">
    <location>
        <begin position="59"/>
        <end position="79"/>
    </location>
</feature>
<feature type="transmembrane region" description="Helical" evidence="1">
    <location>
        <begin position="146"/>
        <end position="166"/>
    </location>
</feature>
<feature type="transmembrane region" description="Helical" evidence="1">
    <location>
        <begin position="192"/>
        <end position="212"/>
    </location>
</feature>
<feature type="transmembrane region" description="Helical" evidence="1">
    <location>
        <begin position="335"/>
        <end position="355"/>
    </location>
</feature>
<dbReference type="EC" id="2.3.1.-" evidence="3"/>
<dbReference type="BioCyc" id="MetaCyc:MONOMER-124261"/>
<dbReference type="GO" id="GO:0016020">
    <property type="term" value="C:membrane"/>
    <property type="evidence" value="ECO:0007669"/>
    <property type="project" value="UniProtKB-SubCell"/>
</dbReference>
<dbReference type="GO" id="GO:0008374">
    <property type="term" value="F:O-acyltransferase activity"/>
    <property type="evidence" value="ECO:0007669"/>
    <property type="project" value="InterPro"/>
</dbReference>
<dbReference type="GO" id="GO:0006629">
    <property type="term" value="P:lipid metabolic process"/>
    <property type="evidence" value="ECO:0007669"/>
    <property type="project" value="InterPro"/>
</dbReference>
<dbReference type="InterPro" id="IPR044851">
    <property type="entry name" value="Wax_synthase"/>
</dbReference>
<dbReference type="InterPro" id="IPR032805">
    <property type="entry name" value="Wax_synthase_dom"/>
</dbReference>
<dbReference type="PANTHER" id="PTHR31595">
    <property type="entry name" value="LONG-CHAIN-ALCOHOL O-FATTY-ACYLTRANSFERASE 3-RELATED"/>
    <property type="match status" value="1"/>
</dbReference>
<dbReference type="PANTHER" id="PTHR31595:SF57">
    <property type="entry name" value="OS04G0481900 PROTEIN"/>
    <property type="match status" value="1"/>
</dbReference>
<dbReference type="Pfam" id="PF13813">
    <property type="entry name" value="MBOAT_2"/>
    <property type="match status" value="1"/>
</dbReference>
<protein>
    <recommendedName>
        <fullName evidence="4">Acetyltransferase eriL</fullName>
        <ecNumber evidence="3">2.3.1.-</ecNumber>
    </recommendedName>
    <alternativeName>
        <fullName evidence="4">Erinacine biosynthesis cluster protein L</fullName>
    </alternativeName>
</protein>
<sequence length="382" mass="43793">MSTTLQPLPGGLQVAVQACLFLGAVSRSRRFRALLFPPVLAMSLYMLLYTTTGKDSDDIVTWSLITTSLLQGSDILLINDVADLRLVGQKTPTNELSLWQRIKWAGRLMSAPRAVGFTHESRHVFPPHPPANEPRWTFIKRQSLTTLFYFVVLDLVHTFIVLSPVFQRDGVSLTSVDWPMRFLYTALHAAHLWSYMSFGYSAASVVLVALGVSDSDQWPAIYGDWSNAYTIRRFWGRVWHQVFRRIVSTHGDFVTYRFLALPKGTFFADNVHRYTAFFISGVIHAVGEYGMFRDQWLQKSGALRFFLLQATAILVEQEVGKIFKLQPTPLLRRLGYMWTFLWFVFTLPHWMDPQFRQGMADNYGFPLSVSYGLLKGQWRLVA</sequence>
<keyword id="KW-0012">Acyltransferase</keyword>
<keyword id="KW-0472">Membrane</keyword>
<keyword id="KW-0808">Transferase</keyword>
<keyword id="KW-0812">Transmembrane</keyword>
<keyword id="KW-1133">Transmembrane helix</keyword>
<evidence type="ECO:0000255" key="1"/>
<evidence type="ECO:0000269" key="2">
    <source>
    </source>
</evidence>
<evidence type="ECO:0000269" key="3">
    <source>
    </source>
</evidence>
<evidence type="ECO:0000303" key="4">
    <source>
    </source>
</evidence>
<evidence type="ECO:0000305" key="5"/>
<evidence type="ECO:0000305" key="6">
    <source>
    </source>
</evidence>
<reference key="1">
    <citation type="journal article" date="2019" name="J. Am. Chem. Soc.">
        <title>Efficient reconstitution of basidiomycota diterpene erinacine gene cluster in ascomycota host Aspergillus oryzae based on genomic DNA sequences.</title>
        <authorList>
            <person name="Liu C."/>
            <person name="Minami A."/>
            <person name="Ozaki T."/>
            <person name="Wu J."/>
            <person name="Kawagishi H."/>
            <person name="Maruyama J.I."/>
            <person name="Oikawa H."/>
        </authorList>
    </citation>
    <scope>NUCLEOTIDE SEQUENCE [GENOMIC DNA]</scope>
    <scope>FUNCTION</scope>
    <scope>CATALYTIC ACTIVITY</scope>
    <scope>PATHWAY</scope>
</reference>
<reference key="2">
    <citation type="journal article" date="2017" name="Angew. Chem. Int. Ed.">
        <title>Discovery and characterization of a new family of diterpene cyclases in bacteria and fungi.</title>
        <authorList>
            <person name="Yang Y.L."/>
            <person name="Zhang S."/>
            <person name="Ma K."/>
            <person name="Xu Y."/>
            <person name="Tao Q."/>
            <person name="Chen Y."/>
            <person name="Chen J."/>
            <person name="Guo S."/>
            <person name="Ren J."/>
            <person name="Wang W."/>
            <person name="Tao Y."/>
            <person name="Yin W.B."/>
            <person name="Liu H."/>
        </authorList>
    </citation>
    <scope>FUNCTION</scope>
</reference>
<gene>
    <name evidence="4" type="primary">eriL</name>
</gene>
<name>ERIL_HERER</name>
<organism>
    <name type="scientific">Hericium erinaceus</name>
    <name type="common">Lion's mane mushroom</name>
    <name type="synonym">Hydnum erinaceus</name>
    <dbReference type="NCBI Taxonomy" id="91752"/>
    <lineage>
        <taxon>Eukaryota</taxon>
        <taxon>Fungi</taxon>
        <taxon>Dikarya</taxon>
        <taxon>Basidiomycota</taxon>
        <taxon>Agaricomycotina</taxon>
        <taxon>Agaricomycetes</taxon>
        <taxon>Russulales</taxon>
        <taxon>Hericiaceae</taxon>
        <taxon>Hericium</taxon>
    </lineage>
</organism>